<accession>B1LNN6</accession>
<organism>
    <name type="scientific">Escherichia coli (strain SMS-3-5 / SECEC)</name>
    <dbReference type="NCBI Taxonomy" id="439855"/>
    <lineage>
        <taxon>Bacteria</taxon>
        <taxon>Pseudomonadati</taxon>
        <taxon>Pseudomonadota</taxon>
        <taxon>Gammaproteobacteria</taxon>
        <taxon>Enterobacterales</taxon>
        <taxon>Enterobacteriaceae</taxon>
        <taxon>Escherichia</taxon>
    </lineage>
</organism>
<evidence type="ECO:0000255" key="1">
    <source>
        <dbReference type="HAMAP-Rule" id="MF_00249"/>
    </source>
</evidence>
<sequence>MSEMTPREIVSELDKHIIGQDNAKRSVAIALRNRWRRMQLNEELRHEVTPKNILMIGPTGVGKTEIARRLAKLANAPFIKVEATKFTEVGYVGKEVDSIIRDLTDAAVKMVRVQAIEKNRYRAEELAEERILDVLIPPAKNNWGQTEQQQEPSAARQAFRKKLREGQLDDKEIEIDLAAAPMGVEIMAPPGMEEMTSQLQSMFQNLGGQKQKARKLKIKDAMKLLIEEEAAKLVNPEELKQDAIDAVEQHGIVFIDEIDKICKRGESSGPDVSREGVQRDLLPLVEGCTVSTKHGMVKTDHILFIASGAFQIAKPSDLIPELQGRLPIRVELQALTTSDFERILTEPNASITVQYKALMATEGVNIEFTDSGIKRIAEAAWQVNESTENIGARRLHTVLERLMEEISYDASDLSGQTITIDADYVSKHLDALVADEDLSRFIL</sequence>
<protein>
    <recommendedName>
        <fullName evidence="1">ATP-dependent protease ATPase subunit HslU</fullName>
    </recommendedName>
    <alternativeName>
        <fullName evidence="1">Heat shock protein HslU</fullName>
    </alternativeName>
    <alternativeName>
        <fullName evidence="1">Unfoldase HslU</fullName>
    </alternativeName>
</protein>
<reference key="1">
    <citation type="journal article" date="2008" name="J. Bacteriol.">
        <title>Insights into the environmental resistance gene pool from the genome sequence of the multidrug-resistant environmental isolate Escherichia coli SMS-3-5.</title>
        <authorList>
            <person name="Fricke W.F."/>
            <person name="Wright M.S."/>
            <person name="Lindell A.H."/>
            <person name="Harkins D.M."/>
            <person name="Baker-Austin C."/>
            <person name="Ravel J."/>
            <person name="Stepanauskas R."/>
        </authorList>
    </citation>
    <scope>NUCLEOTIDE SEQUENCE [LARGE SCALE GENOMIC DNA]</scope>
    <source>
        <strain>SMS-3-5 / SECEC</strain>
    </source>
</reference>
<feature type="chain" id="PRO_1000119106" description="ATP-dependent protease ATPase subunit HslU">
    <location>
        <begin position="1"/>
        <end position="443"/>
    </location>
</feature>
<feature type="binding site" evidence="1">
    <location>
        <position position="18"/>
    </location>
    <ligand>
        <name>ATP</name>
        <dbReference type="ChEBI" id="CHEBI:30616"/>
    </ligand>
</feature>
<feature type="binding site" evidence="1">
    <location>
        <begin position="60"/>
        <end position="65"/>
    </location>
    <ligand>
        <name>ATP</name>
        <dbReference type="ChEBI" id="CHEBI:30616"/>
    </ligand>
</feature>
<feature type="binding site" evidence="1">
    <location>
        <position position="256"/>
    </location>
    <ligand>
        <name>ATP</name>
        <dbReference type="ChEBI" id="CHEBI:30616"/>
    </ligand>
</feature>
<feature type="binding site" evidence="1">
    <location>
        <position position="321"/>
    </location>
    <ligand>
        <name>ATP</name>
        <dbReference type="ChEBI" id="CHEBI:30616"/>
    </ligand>
</feature>
<feature type="binding site" evidence="1">
    <location>
        <position position="393"/>
    </location>
    <ligand>
        <name>ATP</name>
        <dbReference type="ChEBI" id="CHEBI:30616"/>
    </ligand>
</feature>
<comment type="function">
    <text evidence="1">ATPase subunit of a proteasome-like degradation complex; this subunit has chaperone activity. The binding of ATP and its subsequent hydrolysis by HslU are essential for unfolding of protein substrates subsequently hydrolyzed by HslV. HslU recognizes the N-terminal part of its protein substrates and unfolds these before they are guided to HslV for hydrolysis.</text>
</comment>
<comment type="subunit">
    <text evidence="1">A double ring-shaped homohexamer of HslV is capped on each side by a ring-shaped HslU homohexamer. The assembly of the HslU/HslV complex is dependent on binding of ATP.</text>
</comment>
<comment type="subcellular location">
    <subcellularLocation>
        <location evidence="1">Cytoplasm</location>
    </subcellularLocation>
</comment>
<comment type="induction">
    <text evidence="1">By heat shock.</text>
</comment>
<comment type="similarity">
    <text evidence="1">Belongs to the ClpX chaperone family. HslU subfamily.</text>
</comment>
<keyword id="KW-0067">ATP-binding</keyword>
<keyword id="KW-0143">Chaperone</keyword>
<keyword id="KW-0963">Cytoplasm</keyword>
<keyword id="KW-0547">Nucleotide-binding</keyword>
<keyword id="KW-0346">Stress response</keyword>
<proteinExistence type="inferred from homology"/>
<gene>
    <name evidence="1" type="primary">hslU</name>
    <name type="ordered locus">EcSMS35_4373</name>
</gene>
<dbReference type="EMBL" id="CP000970">
    <property type="protein sequence ID" value="ACB18908.1"/>
    <property type="molecule type" value="Genomic_DNA"/>
</dbReference>
<dbReference type="RefSeq" id="WP_001293344.1">
    <property type="nucleotide sequence ID" value="NC_010498.1"/>
</dbReference>
<dbReference type="SMR" id="B1LNN6"/>
<dbReference type="KEGG" id="ecm:EcSMS35_4373"/>
<dbReference type="HOGENOM" id="CLU_033123_0_0_6"/>
<dbReference type="Proteomes" id="UP000007011">
    <property type="component" value="Chromosome"/>
</dbReference>
<dbReference type="GO" id="GO:0009376">
    <property type="term" value="C:HslUV protease complex"/>
    <property type="evidence" value="ECO:0007669"/>
    <property type="project" value="UniProtKB-UniRule"/>
</dbReference>
<dbReference type="GO" id="GO:0005524">
    <property type="term" value="F:ATP binding"/>
    <property type="evidence" value="ECO:0007669"/>
    <property type="project" value="UniProtKB-UniRule"/>
</dbReference>
<dbReference type="GO" id="GO:0016887">
    <property type="term" value="F:ATP hydrolysis activity"/>
    <property type="evidence" value="ECO:0007669"/>
    <property type="project" value="InterPro"/>
</dbReference>
<dbReference type="GO" id="GO:0008233">
    <property type="term" value="F:peptidase activity"/>
    <property type="evidence" value="ECO:0007669"/>
    <property type="project" value="InterPro"/>
</dbReference>
<dbReference type="GO" id="GO:0036402">
    <property type="term" value="F:proteasome-activating activity"/>
    <property type="evidence" value="ECO:0007669"/>
    <property type="project" value="UniProtKB-UniRule"/>
</dbReference>
<dbReference type="GO" id="GO:0043335">
    <property type="term" value="P:protein unfolding"/>
    <property type="evidence" value="ECO:0007669"/>
    <property type="project" value="UniProtKB-UniRule"/>
</dbReference>
<dbReference type="GO" id="GO:0051603">
    <property type="term" value="P:proteolysis involved in protein catabolic process"/>
    <property type="evidence" value="ECO:0007669"/>
    <property type="project" value="TreeGrafter"/>
</dbReference>
<dbReference type="CDD" id="cd19498">
    <property type="entry name" value="RecA-like_HslU"/>
    <property type="match status" value="1"/>
</dbReference>
<dbReference type="FunFam" id="1.10.8.10:FF:000012">
    <property type="entry name" value="ATP-dependent protease ATPase subunit HslU"/>
    <property type="match status" value="1"/>
</dbReference>
<dbReference type="FunFam" id="1.10.8.10:FF:000028">
    <property type="entry name" value="ATP-dependent protease ATPase subunit HslU"/>
    <property type="match status" value="1"/>
</dbReference>
<dbReference type="FunFam" id="1.10.8.60:FF:000027">
    <property type="entry name" value="ATP-dependent protease ATPase subunit HslU"/>
    <property type="match status" value="1"/>
</dbReference>
<dbReference type="FunFam" id="3.40.50.300:FF:000213">
    <property type="entry name" value="ATP-dependent protease ATPase subunit HslU"/>
    <property type="match status" value="1"/>
</dbReference>
<dbReference type="FunFam" id="3.40.50.300:FF:000220">
    <property type="entry name" value="ATP-dependent protease ATPase subunit HslU"/>
    <property type="match status" value="1"/>
</dbReference>
<dbReference type="Gene3D" id="1.10.8.60">
    <property type="match status" value="1"/>
</dbReference>
<dbReference type="Gene3D" id="1.10.8.10">
    <property type="entry name" value="DNA helicase RuvA subunit, C-terminal domain"/>
    <property type="match status" value="2"/>
</dbReference>
<dbReference type="Gene3D" id="3.40.50.300">
    <property type="entry name" value="P-loop containing nucleotide triphosphate hydrolases"/>
    <property type="match status" value="1"/>
</dbReference>
<dbReference type="HAMAP" id="MF_00249">
    <property type="entry name" value="HslU"/>
    <property type="match status" value="1"/>
</dbReference>
<dbReference type="InterPro" id="IPR003593">
    <property type="entry name" value="AAA+_ATPase"/>
</dbReference>
<dbReference type="InterPro" id="IPR050052">
    <property type="entry name" value="ATP-dep_Clp_protease_ClpX"/>
</dbReference>
<dbReference type="InterPro" id="IPR003959">
    <property type="entry name" value="ATPase_AAA_core"/>
</dbReference>
<dbReference type="InterPro" id="IPR019489">
    <property type="entry name" value="Clp_ATPase_C"/>
</dbReference>
<dbReference type="InterPro" id="IPR004491">
    <property type="entry name" value="HslU"/>
</dbReference>
<dbReference type="InterPro" id="IPR027417">
    <property type="entry name" value="P-loop_NTPase"/>
</dbReference>
<dbReference type="NCBIfam" id="TIGR00390">
    <property type="entry name" value="hslU"/>
    <property type="match status" value="1"/>
</dbReference>
<dbReference type="NCBIfam" id="NF003544">
    <property type="entry name" value="PRK05201.1"/>
    <property type="match status" value="1"/>
</dbReference>
<dbReference type="PANTHER" id="PTHR48102">
    <property type="entry name" value="ATP-DEPENDENT CLP PROTEASE ATP-BINDING SUBUNIT CLPX-LIKE, MITOCHONDRIAL-RELATED"/>
    <property type="match status" value="1"/>
</dbReference>
<dbReference type="PANTHER" id="PTHR48102:SF3">
    <property type="entry name" value="ATP-DEPENDENT PROTEASE ATPASE SUBUNIT HSLU"/>
    <property type="match status" value="1"/>
</dbReference>
<dbReference type="Pfam" id="PF00004">
    <property type="entry name" value="AAA"/>
    <property type="match status" value="1"/>
</dbReference>
<dbReference type="Pfam" id="PF07724">
    <property type="entry name" value="AAA_2"/>
    <property type="match status" value="1"/>
</dbReference>
<dbReference type="SMART" id="SM00382">
    <property type="entry name" value="AAA"/>
    <property type="match status" value="1"/>
</dbReference>
<dbReference type="SMART" id="SM01086">
    <property type="entry name" value="ClpB_D2-small"/>
    <property type="match status" value="1"/>
</dbReference>
<dbReference type="SUPFAM" id="SSF52540">
    <property type="entry name" value="P-loop containing nucleoside triphosphate hydrolases"/>
    <property type="match status" value="1"/>
</dbReference>
<name>HSLU_ECOSM</name>